<accession>F5HAS7</accession>
<dbReference type="EMBL" id="AY446894">
    <property type="protein sequence ID" value="AAR31643.1"/>
    <property type="molecule type" value="Genomic_DNA"/>
</dbReference>
<dbReference type="RefSeq" id="YP_081539.1">
    <property type="nucleotide sequence ID" value="NC_006273.2"/>
</dbReference>
<dbReference type="DNASU" id="3077564"/>
<dbReference type="GeneID" id="3077564"/>
<dbReference type="KEGG" id="vg:3077564"/>
<dbReference type="Reactome" id="R-HSA-9610379">
    <property type="pathway name" value="HCMV Late Events"/>
</dbReference>
<dbReference type="Proteomes" id="UP000000938">
    <property type="component" value="Segment"/>
</dbReference>
<dbReference type="InterPro" id="IPR004289">
    <property type="entry name" value="Herpes_UL92"/>
</dbReference>
<dbReference type="Pfam" id="PF03048">
    <property type="entry name" value="Herpes_UL92"/>
    <property type="match status" value="1"/>
</dbReference>
<proteinExistence type="predicted"/>
<gene>
    <name type="primary">UL92</name>
</gene>
<reference key="1">
    <citation type="journal article" date="2004" name="J. Gen. Virol.">
        <title>Genetic content of wild-type human cytomegalovirus.</title>
        <authorList>
            <person name="Dolan A."/>
            <person name="Cunningham C."/>
            <person name="Hector R.D."/>
            <person name="Hassan-Walker A.F."/>
            <person name="Lee L."/>
            <person name="Addison C."/>
            <person name="Dargan D.J."/>
            <person name="McGeoch D.J."/>
            <person name="Gatherer D."/>
            <person name="Emery V.C."/>
            <person name="Griffiths P.D."/>
            <person name="Sinzger C."/>
            <person name="McSharry B.P."/>
            <person name="Wilkinson G.W.G."/>
            <person name="Davison A.J."/>
        </authorList>
    </citation>
    <scope>NUCLEOTIDE SEQUENCE [LARGE SCALE GENOMIC DNA]</scope>
</reference>
<keyword id="KW-1185">Reference proteome</keyword>
<name>UL92_HCMVM</name>
<organismHost>
    <name type="scientific">Homo sapiens</name>
    <name type="common">Human</name>
    <dbReference type="NCBI Taxonomy" id="9606"/>
</organismHost>
<feature type="chain" id="PRO_0000418290" description="Uncharacterized protein UL92">
    <location>
        <begin position="1"/>
        <end position="201"/>
    </location>
</feature>
<organism>
    <name type="scientific">Human cytomegalovirus (strain Merlin)</name>
    <name type="common">HHV-5</name>
    <name type="synonym">Human herpesvirus 5</name>
    <dbReference type="NCBI Taxonomy" id="295027"/>
    <lineage>
        <taxon>Viruses</taxon>
        <taxon>Duplodnaviria</taxon>
        <taxon>Heunggongvirae</taxon>
        <taxon>Peploviricota</taxon>
        <taxon>Herviviricetes</taxon>
        <taxon>Herpesvirales</taxon>
        <taxon>Orthoherpesviridae</taxon>
        <taxon>Betaherpesvirinae</taxon>
        <taxon>Cytomegalovirus</taxon>
        <taxon>Cytomegalovirus humanbeta5</taxon>
        <taxon>Human cytomegalovirus</taxon>
    </lineage>
</organism>
<sequence>MCDASGACDMRHVQNAFTEEIQLHSLYACTRCFRTHLCDLGSGCALVSTLEGSVCVKTGLVYEALYPVARSHLLEPIEEAALDDVNIISAVLSGVYSYLMTHAGRYADVIQEVVERDRLKKQVEDSIYFTFNKVFRSMHNVNRISVPVISQLFIQLIIGIYSKQTKYDACVIKVSRKKREDALLKQMRSEYGNAPVFGSGV</sequence>
<protein>
    <recommendedName>
        <fullName>Uncharacterized protein UL92</fullName>
    </recommendedName>
</protein>